<protein>
    <recommendedName>
        <fullName>Probable NADPH:quinone oxidoreductase 1</fullName>
        <ecNumber>1.6.5.2</ecNumber>
    </recommendedName>
</protein>
<gene>
    <name type="ordered locus">Os01g0953600</name>
    <name type="ordered locus">LOC_Os01g72430</name>
    <name evidence="3" type="ORF">OsJ_04792</name>
    <name type="ORF">P0431G06.26-1</name>
</gene>
<feature type="chain" id="PRO_0000160603" description="Probable NADPH:quinone oxidoreductase 1">
    <location>
        <begin position="1"/>
        <end position="197"/>
    </location>
</feature>
<evidence type="ECO:0000250" key="1"/>
<evidence type="ECO:0000305" key="2"/>
<evidence type="ECO:0000312" key="3">
    <source>
        <dbReference type="EMBL" id="EAZ14864.1"/>
    </source>
</evidence>
<name>NQR1_ORYSJ</name>
<dbReference type="EC" id="1.6.5.2"/>
<dbReference type="EMBL" id="AP003683">
    <property type="protein sequence ID" value="BAB64708.1"/>
    <property type="molecule type" value="Genomic_DNA"/>
</dbReference>
<dbReference type="EMBL" id="AP008207">
    <property type="protein sequence ID" value="BAF07343.1"/>
    <property type="molecule type" value="Genomic_DNA"/>
</dbReference>
<dbReference type="EMBL" id="AP014957">
    <property type="protein sequence ID" value="BAS76267.1"/>
    <property type="molecule type" value="Genomic_DNA"/>
</dbReference>
<dbReference type="EMBL" id="CM000138">
    <property type="protein sequence ID" value="EAZ14864.1"/>
    <property type="molecule type" value="Genomic_DNA"/>
</dbReference>
<dbReference type="EMBL" id="AK071823">
    <property type="status" value="NOT_ANNOTATED_CDS"/>
    <property type="molecule type" value="mRNA"/>
</dbReference>
<dbReference type="EMBL" id="AK100697">
    <property type="status" value="NOT_ANNOTATED_CDS"/>
    <property type="molecule type" value="mRNA"/>
</dbReference>
<dbReference type="RefSeq" id="XP_015614534.1">
    <property type="nucleotide sequence ID" value="XM_015759048.1"/>
</dbReference>
<dbReference type="SMR" id="Q941Z0"/>
<dbReference type="FunCoup" id="Q941Z0">
    <property type="interactions" value="308"/>
</dbReference>
<dbReference type="STRING" id="39947.Q941Z0"/>
<dbReference type="PaxDb" id="39947-Q941Z0"/>
<dbReference type="EnsemblPlants" id="Os01t0953600-01">
    <property type="protein sequence ID" value="Os01t0953600-01"/>
    <property type="gene ID" value="Os01g0953600"/>
</dbReference>
<dbReference type="EnsemblPlants" id="Os01t0953600-02">
    <property type="protein sequence ID" value="Os01t0953600-02"/>
    <property type="gene ID" value="Os01g0953600"/>
</dbReference>
<dbReference type="Gramene" id="Os01t0953600-01">
    <property type="protein sequence ID" value="Os01t0953600-01"/>
    <property type="gene ID" value="Os01g0953600"/>
</dbReference>
<dbReference type="Gramene" id="Os01t0953600-02">
    <property type="protein sequence ID" value="Os01t0953600-02"/>
    <property type="gene ID" value="Os01g0953600"/>
</dbReference>
<dbReference type="KEGG" id="dosa:Os01g0953600"/>
<dbReference type="eggNOG" id="KOG4530">
    <property type="taxonomic scope" value="Eukaryota"/>
</dbReference>
<dbReference type="HOGENOM" id="CLU_055322_4_2_1"/>
<dbReference type="InParanoid" id="Q941Z0"/>
<dbReference type="OMA" id="LECWLAP"/>
<dbReference type="OrthoDB" id="68575at2759"/>
<dbReference type="Proteomes" id="UP000000763">
    <property type="component" value="Chromosome 1"/>
</dbReference>
<dbReference type="Proteomes" id="UP000007752">
    <property type="component" value="Chromosome 1"/>
</dbReference>
<dbReference type="Proteomes" id="UP000059680">
    <property type="component" value="Chromosome 1"/>
</dbReference>
<dbReference type="GO" id="GO:0005829">
    <property type="term" value="C:cytosol"/>
    <property type="evidence" value="ECO:0000318"/>
    <property type="project" value="GO_Central"/>
</dbReference>
<dbReference type="GO" id="GO:0010181">
    <property type="term" value="F:FMN binding"/>
    <property type="evidence" value="ECO:0000318"/>
    <property type="project" value="GO_Central"/>
</dbReference>
<dbReference type="GO" id="GO:0050136">
    <property type="term" value="F:NADH:ubiquinone reductase (non-electrogenic) activity"/>
    <property type="evidence" value="ECO:0007669"/>
    <property type="project" value="RHEA"/>
</dbReference>
<dbReference type="GO" id="GO:0008753">
    <property type="term" value="F:NADPH dehydrogenase (quinone) activity"/>
    <property type="evidence" value="ECO:0007669"/>
    <property type="project" value="RHEA"/>
</dbReference>
<dbReference type="FunFam" id="3.40.50.360:FF:000031">
    <property type="entry name" value="NADPH:quinone oxidoreductase"/>
    <property type="match status" value="1"/>
</dbReference>
<dbReference type="Gene3D" id="3.40.50.360">
    <property type="match status" value="1"/>
</dbReference>
<dbReference type="InterPro" id="IPR029039">
    <property type="entry name" value="Flavoprotein-like_sf"/>
</dbReference>
<dbReference type="InterPro" id="IPR005025">
    <property type="entry name" value="FMN_Rdtase-like_dom"/>
</dbReference>
<dbReference type="InterPro" id="IPR050712">
    <property type="entry name" value="NAD(P)H-dep_reductase"/>
</dbReference>
<dbReference type="PANTHER" id="PTHR30543">
    <property type="entry name" value="CHROMATE REDUCTASE"/>
    <property type="match status" value="1"/>
</dbReference>
<dbReference type="PANTHER" id="PTHR30543:SF21">
    <property type="entry name" value="NAD(P)H-DEPENDENT FMN REDUCTASE LOT6"/>
    <property type="match status" value="1"/>
</dbReference>
<dbReference type="Pfam" id="PF03358">
    <property type="entry name" value="FMN_red"/>
    <property type="match status" value="1"/>
</dbReference>
<dbReference type="SUPFAM" id="SSF52218">
    <property type="entry name" value="Flavoproteins"/>
    <property type="match status" value="1"/>
</dbReference>
<organism>
    <name type="scientific">Oryza sativa subsp. japonica</name>
    <name type="common">Rice</name>
    <dbReference type="NCBI Taxonomy" id="39947"/>
    <lineage>
        <taxon>Eukaryota</taxon>
        <taxon>Viridiplantae</taxon>
        <taxon>Streptophyta</taxon>
        <taxon>Embryophyta</taxon>
        <taxon>Tracheophyta</taxon>
        <taxon>Spermatophyta</taxon>
        <taxon>Magnoliopsida</taxon>
        <taxon>Liliopsida</taxon>
        <taxon>Poales</taxon>
        <taxon>Poaceae</taxon>
        <taxon>BOP clade</taxon>
        <taxon>Oryzoideae</taxon>
        <taxon>Oryzeae</taxon>
        <taxon>Oryzinae</taxon>
        <taxon>Oryza</taxon>
        <taxon>Oryza sativa</taxon>
    </lineage>
</organism>
<proteinExistence type="evidence at transcript level"/>
<keyword id="KW-0285">Flavoprotein</keyword>
<keyword id="KW-0288">FMN</keyword>
<keyword id="KW-0520">NAD</keyword>
<keyword id="KW-0521">NADP</keyword>
<keyword id="KW-0560">Oxidoreductase</keyword>
<keyword id="KW-1185">Reference proteome</keyword>
<accession>Q941Z0</accession>
<accession>Q0JFY5</accession>
<comment type="function">
    <text evidence="1">The enzyme apparently serves as a quinone reductase in connection with conjugation reactions of hydroquinones involved in detoxification pathways.</text>
</comment>
<comment type="catalytic activity">
    <reaction>
        <text>a quinone + NADH + H(+) = a quinol + NAD(+)</text>
        <dbReference type="Rhea" id="RHEA:46160"/>
        <dbReference type="ChEBI" id="CHEBI:15378"/>
        <dbReference type="ChEBI" id="CHEBI:24646"/>
        <dbReference type="ChEBI" id="CHEBI:57540"/>
        <dbReference type="ChEBI" id="CHEBI:57945"/>
        <dbReference type="ChEBI" id="CHEBI:132124"/>
        <dbReference type="EC" id="1.6.5.2"/>
    </reaction>
</comment>
<comment type="catalytic activity">
    <reaction>
        <text>a quinone + NADPH + H(+) = a quinol + NADP(+)</text>
        <dbReference type="Rhea" id="RHEA:46164"/>
        <dbReference type="ChEBI" id="CHEBI:15378"/>
        <dbReference type="ChEBI" id="CHEBI:24646"/>
        <dbReference type="ChEBI" id="CHEBI:57783"/>
        <dbReference type="ChEBI" id="CHEBI:58349"/>
        <dbReference type="ChEBI" id="CHEBI:132124"/>
        <dbReference type="EC" id="1.6.5.2"/>
    </reaction>
</comment>
<comment type="cofactor">
    <cofactor evidence="1">
        <name>FMN</name>
        <dbReference type="ChEBI" id="CHEBI:58210"/>
    </cofactor>
</comment>
<comment type="subunit">
    <text evidence="1">Homotetramer.</text>
</comment>
<comment type="similarity">
    <text evidence="2">Belongs to the SsuE family.</text>
</comment>
<sequence length="197" mass="21324">MEAAAARPVIRVAAICGSLRKASYNGGLLRAAAGVCEESIPGLRVDHVDISGLPLLNTDLETADGGFPPAVEAFRDKVRQADCFLFGSPEYNYSIATPLKNALDWASRGQNCWADKPAAIVSAGGGFGGGRSQYHLRQVGVFLDLHFINKPELAVKAFEQPPKFDSDGNLIDAQIRERIKQVLLSLQAFTLRLQKKD</sequence>
<reference key="1">
    <citation type="journal article" date="2002" name="Nature">
        <title>The genome sequence and structure of rice chromosome 1.</title>
        <authorList>
            <person name="Sasaki T."/>
            <person name="Matsumoto T."/>
            <person name="Yamamoto K."/>
            <person name="Sakata K."/>
            <person name="Baba T."/>
            <person name="Katayose Y."/>
            <person name="Wu J."/>
            <person name="Niimura Y."/>
            <person name="Cheng Z."/>
            <person name="Nagamura Y."/>
            <person name="Antonio B.A."/>
            <person name="Kanamori H."/>
            <person name="Hosokawa S."/>
            <person name="Masukawa M."/>
            <person name="Arikawa K."/>
            <person name="Chiden Y."/>
            <person name="Hayashi M."/>
            <person name="Okamoto M."/>
            <person name="Ando T."/>
            <person name="Aoki H."/>
            <person name="Arita K."/>
            <person name="Hamada M."/>
            <person name="Harada C."/>
            <person name="Hijishita S."/>
            <person name="Honda M."/>
            <person name="Ichikawa Y."/>
            <person name="Idonuma A."/>
            <person name="Iijima M."/>
            <person name="Ikeda M."/>
            <person name="Ikeno M."/>
            <person name="Ito S."/>
            <person name="Ito T."/>
            <person name="Ito Y."/>
            <person name="Ito Y."/>
            <person name="Iwabuchi A."/>
            <person name="Kamiya K."/>
            <person name="Karasawa W."/>
            <person name="Katagiri S."/>
            <person name="Kikuta A."/>
            <person name="Kobayashi N."/>
            <person name="Kono I."/>
            <person name="Machita K."/>
            <person name="Maehara T."/>
            <person name="Mizuno H."/>
            <person name="Mizubayashi T."/>
            <person name="Mukai Y."/>
            <person name="Nagasaki H."/>
            <person name="Nakashima M."/>
            <person name="Nakama Y."/>
            <person name="Nakamichi Y."/>
            <person name="Nakamura M."/>
            <person name="Namiki N."/>
            <person name="Negishi M."/>
            <person name="Ohta I."/>
            <person name="Ono N."/>
            <person name="Saji S."/>
            <person name="Sakai K."/>
            <person name="Shibata M."/>
            <person name="Shimokawa T."/>
            <person name="Shomura A."/>
            <person name="Song J."/>
            <person name="Takazaki Y."/>
            <person name="Terasawa K."/>
            <person name="Tsuji K."/>
            <person name="Waki K."/>
            <person name="Yamagata H."/>
            <person name="Yamane H."/>
            <person name="Yoshiki S."/>
            <person name="Yoshihara R."/>
            <person name="Yukawa K."/>
            <person name="Zhong H."/>
            <person name="Iwama H."/>
            <person name="Endo T."/>
            <person name="Ito H."/>
            <person name="Hahn J.H."/>
            <person name="Kim H.-I."/>
            <person name="Eun M.-Y."/>
            <person name="Yano M."/>
            <person name="Jiang J."/>
            <person name="Gojobori T."/>
        </authorList>
    </citation>
    <scope>NUCLEOTIDE SEQUENCE [LARGE SCALE GENOMIC DNA]</scope>
    <source>
        <strain>cv. Nipponbare</strain>
    </source>
</reference>
<reference key="2">
    <citation type="journal article" date="2005" name="Nature">
        <title>The map-based sequence of the rice genome.</title>
        <authorList>
            <consortium name="International rice genome sequencing project (IRGSP)"/>
        </authorList>
    </citation>
    <scope>NUCLEOTIDE SEQUENCE [LARGE SCALE GENOMIC DNA]</scope>
    <source>
        <strain>cv. Nipponbare</strain>
    </source>
</reference>
<reference key="3">
    <citation type="journal article" date="2008" name="Nucleic Acids Res.">
        <title>The rice annotation project database (RAP-DB): 2008 update.</title>
        <authorList>
            <consortium name="The rice annotation project (RAP)"/>
        </authorList>
    </citation>
    <scope>GENOME REANNOTATION</scope>
    <source>
        <strain>cv. Nipponbare</strain>
    </source>
</reference>
<reference key="4">
    <citation type="journal article" date="2013" name="Rice">
        <title>Improvement of the Oryza sativa Nipponbare reference genome using next generation sequence and optical map data.</title>
        <authorList>
            <person name="Kawahara Y."/>
            <person name="de la Bastide M."/>
            <person name="Hamilton J.P."/>
            <person name="Kanamori H."/>
            <person name="McCombie W.R."/>
            <person name="Ouyang S."/>
            <person name="Schwartz D.C."/>
            <person name="Tanaka T."/>
            <person name="Wu J."/>
            <person name="Zhou S."/>
            <person name="Childs K.L."/>
            <person name="Davidson R.M."/>
            <person name="Lin H."/>
            <person name="Quesada-Ocampo L."/>
            <person name="Vaillancourt B."/>
            <person name="Sakai H."/>
            <person name="Lee S.S."/>
            <person name="Kim J."/>
            <person name="Numa H."/>
            <person name="Itoh T."/>
            <person name="Buell C.R."/>
            <person name="Matsumoto T."/>
        </authorList>
    </citation>
    <scope>GENOME REANNOTATION</scope>
    <source>
        <strain>cv. Nipponbare</strain>
    </source>
</reference>
<reference key="5">
    <citation type="journal article" date="2005" name="PLoS Biol.">
        <title>The genomes of Oryza sativa: a history of duplications.</title>
        <authorList>
            <person name="Yu J."/>
            <person name="Wang J."/>
            <person name="Lin W."/>
            <person name="Li S."/>
            <person name="Li H."/>
            <person name="Zhou J."/>
            <person name="Ni P."/>
            <person name="Dong W."/>
            <person name="Hu S."/>
            <person name="Zeng C."/>
            <person name="Zhang J."/>
            <person name="Zhang Y."/>
            <person name="Li R."/>
            <person name="Xu Z."/>
            <person name="Li S."/>
            <person name="Li X."/>
            <person name="Zheng H."/>
            <person name="Cong L."/>
            <person name="Lin L."/>
            <person name="Yin J."/>
            <person name="Geng J."/>
            <person name="Li G."/>
            <person name="Shi J."/>
            <person name="Liu J."/>
            <person name="Lv H."/>
            <person name="Li J."/>
            <person name="Wang J."/>
            <person name="Deng Y."/>
            <person name="Ran L."/>
            <person name="Shi X."/>
            <person name="Wang X."/>
            <person name="Wu Q."/>
            <person name="Li C."/>
            <person name="Ren X."/>
            <person name="Wang J."/>
            <person name="Wang X."/>
            <person name="Li D."/>
            <person name="Liu D."/>
            <person name="Zhang X."/>
            <person name="Ji Z."/>
            <person name="Zhao W."/>
            <person name="Sun Y."/>
            <person name="Zhang Z."/>
            <person name="Bao J."/>
            <person name="Han Y."/>
            <person name="Dong L."/>
            <person name="Ji J."/>
            <person name="Chen P."/>
            <person name="Wu S."/>
            <person name="Liu J."/>
            <person name="Xiao Y."/>
            <person name="Bu D."/>
            <person name="Tan J."/>
            <person name="Yang L."/>
            <person name="Ye C."/>
            <person name="Zhang J."/>
            <person name="Xu J."/>
            <person name="Zhou Y."/>
            <person name="Yu Y."/>
            <person name="Zhang B."/>
            <person name="Zhuang S."/>
            <person name="Wei H."/>
            <person name="Liu B."/>
            <person name="Lei M."/>
            <person name="Yu H."/>
            <person name="Li Y."/>
            <person name="Xu H."/>
            <person name="Wei S."/>
            <person name="He X."/>
            <person name="Fang L."/>
            <person name="Zhang Z."/>
            <person name="Zhang Y."/>
            <person name="Huang X."/>
            <person name="Su Z."/>
            <person name="Tong W."/>
            <person name="Li J."/>
            <person name="Tong Z."/>
            <person name="Li S."/>
            <person name="Ye J."/>
            <person name="Wang L."/>
            <person name="Fang L."/>
            <person name="Lei T."/>
            <person name="Chen C.-S."/>
            <person name="Chen H.-C."/>
            <person name="Xu Z."/>
            <person name="Li H."/>
            <person name="Huang H."/>
            <person name="Zhang F."/>
            <person name="Xu H."/>
            <person name="Li N."/>
            <person name="Zhao C."/>
            <person name="Li S."/>
            <person name="Dong L."/>
            <person name="Huang Y."/>
            <person name="Li L."/>
            <person name="Xi Y."/>
            <person name="Qi Q."/>
            <person name="Li W."/>
            <person name="Zhang B."/>
            <person name="Hu W."/>
            <person name="Zhang Y."/>
            <person name="Tian X."/>
            <person name="Jiao Y."/>
            <person name="Liang X."/>
            <person name="Jin J."/>
            <person name="Gao L."/>
            <person name="Zheng W."/>
            <person name="Hao B."/>
            <person name="Liu S.-M."/>
            <person name="Wang W."/>
            <person name="Yuan L."/>
            <person name="Cao M."/>
            <person name="McDermott J."/>
            <person name="Samudrala R."/>
            <person name="Wang J."/>
            <person name="Wong G.K.-S."/>
            <person name="Yang H."/>
        </authorList>
    </citation>
    <scope>NUCLEOTIDE SEQUENCE [LARGE SCALE GENOMIC DNA]</scope>
    <source>
        <strain>cv. Nipponbare</strain>
    </source>
</reference>
<reference key="6">
    <citation type="journal article" date="2003" name="Science">
        <title>Collection, mapping, and annotation of over 28,000 cDNA clones from japonica rice.</title>
        <authorList>
            <consortium name="The rice full-length cDNA consortium"/>
        </authorList>
    </citation>
    <scope>NUCLEOTIDE SEQUENCE [LARGE SCALE MRNA]</scope>
    <source>
        <strain>cv. Nipponbare</strain>
    </source>
</reference>